<proteinExistence type="evidence at protein level"/>
<evidence type="ECO:0000250" key="1">
    <source>
        <dbReference type="UniProtKB" id="L0E2Z4"/>
    </source>
</evidence>
<evidence type="ECO:0000250" key="2">
    <source>
        <dbReference type="UniProtKB" id="O93868"/>
    </source>
</evidence>
<evidence type="ECO:0000250" key="3">
    <source>
        <dbReference type="UniProtKB" id="Q4WZ66"/>
    </source>
</evidence>
<evidence type="ECO:0000255" key="4"/>
<evidence type="ECO:0000269" key="5">
    <source>
    </source>
</evidence>
<evidence type="ECO:0000303" key="6">
    <source>
    </source>
</evidence>
<evidence type="ECO:0000305" key="7"/>
<comment type="function">
    <text evidence="5">Chanoclavine-I dehydrogenase; part of the gene cluster that mediates the biosynthesis of fungal ergot alkaloid (PubMed:22403186). DmaW catalyzes the first step of ergot alkaloid biosynthesis by condensing dimethylallyl diphosphate (DMAP) and tryptophan to form 4-dimethylallyl-L-tryptophan (PubMed:22403186). The second step is catalyzed by the methyltransferase easF that methylates 4-dimethylallyl-L-tryptophan in the presence of S-adenosyl-L-methionine, resulting in the formation of 4-dimethylallyl-L-abrine (PubMed:22403186). The catalase easC and the FAD-dependent oxidoreductase easE then transform 4-dimethylallyl-L-abrine to chanoclavine-I which is further oxidized by easD in the presence of NAD(+), resulting in the formation of chanoclavine-I aldehyde (PubMed:22403186). Chanoclavine-I aldehyde is the precursor of ergoamides and ergopeptines in Clavicipitaceae, and clavine-type alcaloids such as fumiclavine in Trichocomaceae (PubMed:22403186). However, the metabolites downstream of chanoclavine-I aldehyde in Arthrodermataceae have not been identified yet (PubMed:22403186).</text>
</comment>
<comment type="catalytic activity">
    <reaction evidence="5">
        <text>chanoclavine-I + NAD(+) = chanoclavine-I aldehyde + NADH + H(+)</text>
        <dbReference type="Rhea" id="RHEA:33891"/>
        <dbReference type="ChEBI" id="CHEBI:15378"/>
        <dbReference type="ChEBI" id="CHEBI:57540"/>
        <dbReference type="ChEBI" id="CHEBI:57945"/>
        <dbReference type="ChEBI" id="CHEBI:71487"/>
        <dbReference type="ChEBI" id="CHEBI:72949"/>
        <dbReference type="EC" id="1.1.1.332"/>
    </reaction>
</comment>
<comment type="biophysicochemical properties">
    <kinetics>
        <KM evidence="5">0.09 mM for chanoclavine-I</KM>
        <KM evidence="5">0.36 mM for NAD(+)</KM>
    </kinetics>
</comment>
<comment type="pathway">
    <text evidence="5">Alkaloid biosynthesis; ergot alkaloid biosynthesis.</text>
</comment>
<comment type="subunit">
    <text evidence="5">Homotetramer.</text>
</comment>
<comment type="similarity">
    <text evidence="7">Belongs to the short-chain dehydrogenases/reductases (SDR) family.</text>
</comment>
<gene>
    <name evidence="6" type="primary">easD</name>
    <name type="ORF">ARB_04646</name>
</gene>
<feature type="signal peptide" evidence="4">
    <location>
        <begin position="1"/>
        <end position="20"/>
    </location>
</feature>
<feature type="chain" id="PRO_0000421748" description="Chanoclavine-I dehydrogenase easD">
    <location>
        <begin position="21"/>
        <end position="246"/>
    </location>
</feature>
<feature type="active site" description="Proton donor" evidence="2">
    <location>
        <position position="169"/>
    </location>
</feature>
<feature type="active site" description="Lowers pKa of active site Tyr" evidence="2">
    <location>
        <position position="173"/>
    </location>
</feature>
<feature type="binding site" evidence="1">
    <location>
        <position position="18"/>
    </location>
    <ligand>
        <name>NADP(+)</name>
        <dbReference type="ChEBI" id="CHEBI:58349"/>
    </ligand>
</feature>
<feature type="binding site" evidence="1">
    <location>
        <position position="66"/>
    </location>
    <ligand>
        <name>NADP(+)</name>
        <dbReference type="ChEBI" id="CHEBI:58349"/>
    </ligand>
</feature>
<feature type="binding site" evidence="1">
    <location>
        <position position="132"/>
    </location>
    <ligand>
        <name>NADP(+)</name>
        <dbReference type="ChEBI" id="CHEBI:58349"/>
    </ligand>
</feature>
<feature type="binding site" evidence="2">
    <location>
        <position position="169"/>
    </location>
    <ligand>
        <name>NADP(+)</name>
        <dbReference type="ChEBI" id="CHEBI:58349"/>
    </ligand>
</feature>
<feature type="binding site" evidence="2">
    <location>
        <position position="173"/>
    </location>
    <ligand>
        <name>NADP(+)</name>
        <dbReference type="ChEBI" id="CHEBI:58349"/>
    </ligand>
</feature>
<name>EASD_ARTBC</name>
<reference key="1">
    <citation type="journal article" date="2011" name="Genome Biol.">
        <title>Comparative and functional genomics provide insights into the pathogenicity of dermatophytic fungi.</title>
        <authorList>
            <person name="Burmester A."/>
            <person name="Shelest E."/>
            <person name="Gloeckner G."/>
            <person name="Heddergott C."/>
            <person name="Schindler S."/>
            <person name="Staib P."/>
            <person name="Heidel A."/>
            <person name="Felder M."/>
            <person name="Petzold A."/>
            <person name="Szafranski K."/>
            <person name="Feuermann M."/>
            <person name="Pedruzzi I."/>
            <person name="Priebe S."/>
            <person name="Groth M."/>
            <person name="Winkler R."/>
            <person name="Li W."/>
            <person name="Kniemeyer O."/>
            <person name="Schroeckh V."/>
            <person name="Hertweck C."/>
            <person name="Hube B."/>
            <person name="White T.C."/>
            <person name="Platzer M."/>
            <person name="Guthke R."/>
            <person name="Heitman J."/>
            <person name="Woestemeyer J."/>
            <person name="Zipfel P.F."/>
            <person name="Monod M."/>
            <person name="Brakhage A.A."/>
        </authorList>
    </citation>
    <scope>NUCLEOTIDE SEQUENCE [LARGE SCALE GENOMIC DNA]</scope>
    <source>
        <strain>ATCC MYA-4681 / CBS 112371</strain>
    </source>
</reference>
<reference key="2">
    <citation type="journal article" date="2012" name="Microbiology">
        <title>Genome mining reveals the presence of a conserved gene cluster for the biosynthesis of ergot alkaloid precursors in the fungal family Arthrodermataceae.</title>
        <authorList>
            <person name="Wallwey C."/>
            <person name="Heddergott C."/>
            <person name="Xie X."/>
            <person name="Brakhage A.A."/>
            <person name="Li S.M."/>
        </authorList>
    </citation>
    <scope>FUNCTION</scope>
    <scope>CATALYTIC ACTIVITY</scope>
    <scope>PATHWAY</scope>
    <scope>SUBUNIT</scope>
    <scope>BIOPHYSICOCHEMICAL PROPERTIES</scope>
</reference>
<dbReference type="EC" id="1.1.1.332" evidence="5"/>
<dbReference type="EMBL" id="ABSU01000001">
    <property type="protein sequence ID" value="EFE37118.1"/>
    <property type="molecule type" value="Genomic_DNA"/>
</dbReference>
<dbReference type="RefSeq" id="XP_003017763.1">
    <property type="nucleotide sequence ID" value="XM_003017717.1"/>
</dbReference>
<dbReference type="SMR" id="D4AK45"/>
<dbReference type="STRING" id="663331.D4AK45"/>
<dbReference type="GeneID" id="9522609"/>
<dbReference type="KEGG" id="abe:ARB_04646"/>
<dbReference type="eggNOG" id="KOG0725">
    <property type="taxonomic scope" value="Eukaryota"/>
</dbReference>
<dbReference type="HOGENOM" id="CLU_010194_1_0_1"/>
<dbReference type="OMA" id="KAGCAYF"/>
<dbReference type="BioCyc" id="MetaCyc:MONOMER-17445"/>
<dbReference type="BRENDA" id="1.1.1.332">
    <property type="organism ID" value="13006"/>
</dbReference>
<dbReference type="UniPathway" id="UPA00327"/>
<dbReference type="Proteomes" id="UP000008866">
    <property type="component" value="Unassembled WGS sequence"/>
</dbReference>
<dbReference type="GO" id="GO:0016616">
    <property type="term" value="F:oxidoreductase activity, acting on the CH-OH group of donors, NAD or NADP as acceptor"/>
    <property type="evidence" value="ECO:0000314"/>
    <property type="project" value="UniProtKB"/>
</dbReference>
<dbReference type="GO" id="GO:0035837">
    <property type="term" value="P:ergot alkaloid biosynthetic process"/>
    <property type="evidence" value="ECO:0000314"/>
    <property type="project" value="UniProtKB"/>
</dbReference>
<dbReference type="GO" id="GO:0051289">
    <property type="term" value="P:protein homotetramerization"/>
    <property type="evidence" value="ECO:0000314"/>
    <property type="project" value="UniProtKB"/>
</dbReference>
<dbReference type="CDD" id="cd05233">
    <property type="entry name" value="SDR_c"/>
    <property type="match status" value="1"/>
</dbReference>
<dbReference type="Gene3D" id="3.40.50.720">
    <property type="entry name" value="NAD(P)-binding Rossmann-like Domain"/>
    <property type="match status" value="1"/>
</dbReference>
<dbReference type="InterPro" id="IPR036291">
    <property type="entry name" value="NAD(P)-bd_dom_sf"/>
</dbReference>
<dbReference type="InterPro" id="IPR002347">
    <property type="entry name" value="SDR_fam"/>
</dbReference>
<dbReference type="PANTHER" id="PTHR24321">
    <property type="entry name" value="DEHYDROGENASES, SHORT CHAIN"/>
    <property type="match status" value="1"/>
</dbReference>
<dbReference type="PANTHER" id="PTHR24321:SF8">
    <property type="entry name" value="ESTRADIOL 17-BETA-DEHYDROGENASE 8-RELATED"/>
    <property type="match status" value="1"/>
</dbReference>
<dbReference type="Pfam" id="PF00106">
    <property type="entry name" value="adh_short"/>
    <property type="match status" value="1"/>
</dbReference>
<dbReference type="PRINTS" id="PR00081">
    <property type="entry name" value="GDHRDH"/>
</dbReference>
<dbReference type="SUPFAM" id="SSF51735">
    <property type="entry name" value="NAD(P)-binding Rossmann-fold domains"/>
    <property type="match status" value="1"/>
</dbReference>
<organism>
    <name type="scientific">Arthroderma benhamiae (strain ATCC MYA-4681 / CBS 112371)</name>
    <name type="common">Trichophyton mentagrophytes</name>
    <dbReference type="NCBI Taxonomy" id="663331"/>
    <lineage>
        <taxon>Eukaryota</taxon>
        <taxon>Fungi</taxon>
        <taxon>Dikarya</taxon>
        <taxon>Ascomycota</taxon>
        <taxon>Pezizomycotina</taxon>
        <taxon>Eurotiomycetes</taxon>
        <taxon>Eurotiomycetidae</taxon>
        <taxon>Onygenales</taxon>
        <taxon>Arthrodermataceae</taxon>
        <taxon>Trichophyton</taxon>
    </lineage>
</organism>
<keyword id="KW-0017">Alkaloid metabolism</keyword>
<keyword id="KW-0521">NADP</keyword>
<keyword id="KW-0560">Oxidoreductase</keyword>
<keyword id="KW-1185">Reference proteome</keyword>
<keyword id="KW-0732">Signal</keyword>
<accession>D4AK45</accession>
<protein>
    <recommendedName>
        <fullName evidence="6">Chanoclavine-I dehydrogenase easD</fullName>
        <shortName evidence="3">ChaDH</shortName>
        <ecNumber evidence="5">1.1.1.332</ecNumber>
    </recommendedName>
    <alternativeName>
        <fullName evidence="6">Ergot alkaloid synthesis protein D</fullName>
    </alternativeName>
</protein>
<sequence>MASVSSKIFAITGGASGIGAATCRLLAKRGAATLCVGDLCSENMKQLENDIKEINPNTKVHCTVLDVSSSSNVDEWIKDIITTFGDLHGAANIAGIAQGAGLRQAPTILEEDDQQWKKVFQVNLDGVLYSTRAQVRAMKESSSTNPGDRSIVNVASIASMSHMPDVFAYGTSKAGCAYFTTCVSQDVMPFGIRANTVSPEEVEETYKKEGFSVIEADDVARTIVWLLSEDSRPVFGANINVGACMP</sequence>